<accession>O83805</accession>
<reference key="1">
    <citation type="journal article" date="1998" name="Science">
        <title>Complete genome sequence of Treponema pallidum, the syphilis spirochete.</title>
        <authorList>
            <person name="Fraser C.M."/>
            <person name="Norris S.J."/>
            <person name="Weinstock G.M."/>
            <person name="White O."/>
            <person name="Sutton G.G."/>
            <person name="Dodson R.J."/>
            <person name="Gwinn M.L."/>
            <person name="Hickey E.K."/>
            <person name="Clayton R.A."/>
            <person name="Ketchum K.A."/>
            <person name="Sodergren E."/>
            <person name="Hardham J.M."/>
            <person name="McLeod M.P."/>
            <person name="Salzberg S.L."/>
            <person name="Peterson J.D."/>
            <person name="Khalak H.G."/>
            <person name="Richardson D.L."/>
            <person name="Howell J.K."/>
            <person name="Chidambaram M."/>
            <person name="Utterback T.R."/>
            <person name="McDonald L.A."/>
            <person name="Artiach P."/>
            <person name="Bowman C."/>
            <person name="Cotton M.D."/>
            <person name="Fujii C."/>
            <person name="Garland S.A."/>
            <person name="Hatch B."/>
            <person name="Horst K."/>
            <person name="Roberts K.M."/>
            <person name="Sandusky M."/>
            <person name="Weidman J.F."/>
            <person name="Smith H.O."/>
            <person name="Venter J.C."/>
        </authorList>
    </citation>
    <scope>NUCLEOTIDE SEQUENCE [LARGE SCALE GENOMIC DNA]</scope>
    <source>
        <strain>Nichols</strain>
    </source>
</reference>
<protein>
    <recommendedName>
        <fullName>Uncharacterized protein TP_0833</fullName>
    </recommendedName>
</protein>
<gene>
    <name type="ordered locus">TP_0833</name>
</gene>
<organism>
    <name type="scientific">Treponema pallidum (strain Nichols)</name>
    <dbReference type="NCBI Taxonomy" id="243276"/>
    <lineage>
        <taxon>Bacteria</taxon>
        <taxon>Pseudomonadati</taxon>
        <taxon>Spirochaetota</taxon>
        <taxon>Spirochaetia</taxon>
        <taxon>Spirochaetales</taxon>
        <taxon>Treponemataceae</taxon>
        <taxon>Treponema</taxon>
    </lineage>
</organism>
<dbReference type="EMBL" id="AE000520">
    <property type="protein sequence ID" value="AAC65802.1"/>
    <property type="molecule type" value="Genomic_DNA"/>
</dbReference>
<dbReference type="PIR" id="C71277">
    <property type="entry name" value="C71277"/>
</dbReference>
<dbReference type="IntAct" id="O83805">
    <property type="interactions" value="51"/>
</dbReference>
<dbReference type="STRING" id="243276.TP_0833"/>
<dbReference type="EnsemblBacteria" id="AAC65802">
    <property type="protein sequence ID" value="AAC65802"/>
    <property type="gene ID" value="TP_0833"/>
</dbReference>
<dbReference type="KEGG" id="tpa:TP_0833"/>
<dbReference type="KEGG" id="tpw:TPANIC_0833"/>
<dbReference type="eggNOG" id="ENOG503004Q">
    <property type="taxonomic scope" value="Bacteria"/>
</dbReference>
<dbReference type="HOGENOM" id="CLU_1155974_0_0_12"/>
<dbReference type="Proteomes" id="UP000000811">
    <property type="component" value="Chromosome"/>
</dbReference>
<keyword id="KW-1185">Reference proteome</keyword>
<keyword id="KW-0732">Signal</keyword>
<proteinExistence type="inferred from homology"/>
<evidence type="ECO:0000255" key="1"/>
<sequence>MRMAFMLLALLFSFRNASIQAEDARLLQPKTNALDLVVQGVDLVLFAQDKTAISISTPPEKDVFFTEHEGVLRVRTRTENAEGTRRVIRIGIPRAQTLAWVKIIATGAHTTVRGVRAVWSLLLCNEGTLALTESTLKSCTLTHTRGELRFEAAVLKRASFCLNDVNARFTLLGSRADYRLICSPGERAWKIEGAEQRGAHYTEPARARRHMVISASASSIDVMFKAPPTQQEAVDTTQKG</sequence>
<feature type="signal peptide" evidence="1">
    <location>
        <begin position="1"/>
        <end position="17"/>
    </location>
</feature>
<feature type="chain" id="PRO_0000014263" description="Uncharacterized protein TP_0833">
    <location>
        <begin position="18"/>
        <end position="240"/>
    </location>
</feature>
<name>Y833_TREPA</name>